<protein>
    <recommendedName>
        <fullName>Class E basic helix-loop-helix protein 40</fullName>
        <shortName>bHLHe40</shortName>
    </recommendedName>
    <alternativeName>
        <fullName>Class B basic helix-loop-helix protein 2</fullName>
        <shortName>bHLHb2</shortName>
    </alternativeName>
</protein>
<name>BHE40_PONAB</name>
<evidence type="ECO:0000250" key="1"/>
<evidence type="ECO:0000250" key="2">
    <source>
        <dbReference type="UniProtKB" id="O14503"/>
    </source>
</evidence>
<evidence type="ECO:0000250" key="3">
    <source>
        <dbReference type="UniProtKB" id="O35185"/>
    </source>
</evidence>
<evidence type="ECO:0000255" key="4">
    <source>
        <dbReference type="PROSITE-ProRule" id="PRU00380"/>
    </source>
</evidence>
<evidence type="ECO:0000255" key="5">
    <source>
        <dbReference type="PROSITE-ProRule" id="PRU00981"/>
    </source>
</evidence>
<evidence type="ECO:0000256" key="6">
    <source>
        <dbReference type="SAM" id="MobiDB-lite"/>
    </source>
</evidence>
<comment type="function">
    <text evidence="2 3">Transcriptional repressor involved in the regulation of the circadian rhythm by negatively regulating the activity of the clock genes and clock-controlled genes. Acts as the negative limb of a novel autoregulatory feedback loop (DEC loop) which differs from the one formed by the PER and CRY transcriptional repressors (PER/CRY loop). Both these loops are interlocked as it represses the expression of PER1/2 and in turn is repressed by PER1/2 and CRY1/2. Represses the activity of the circadian transcriptional activator: CLOCK-BMAL1|BMAL2 heterodimer by competing for the binding to E-box elements (5'-CACGTG-3') found within the promoters of its target genes. Negatively regulates its own expression and the expression of DBP and BHLHE41/DEC2. Acts as a corepressor of RXR and the RXR-LXR heterodimers and represses the ligand-induced RXRA and NR1H3/LXRA transactivation activity. May be involved in the regulation of chondrocyte differentiation via the cAMP pathway (By similarity). Represses the transcription of NR0B2 and attentuates the transactivation of NR0B2 by the CLOCK-BMAL1 complex (By similarity). Drives the circadian rhythm of blood pressure through transcriptional repression of ATP1B1 in the cardiovascular system (By similarity).</text>
</comment>
<comment type="subunit">
    <text evidence="1">Homodimer. Heterodimer with BHLHE41/DEC2. Interacts with TCF3/E47. Interacts with ubiquitin-conjugating enzyme UBE2I/UBC9. Interacts with HDAC1, SUMO1, RXRA and BMAL1 (By similarity).</text>
</comment>
<comment type="subcellular location">
    <subcellularLocation>
        <location evidence="2">Cytoplasm</location>
    </subcellularLocation>
    <subcellularLocation>
        <location evidence="2">Nucleus</location>
    </subcellularLocation>
    <text evidence="2">Predominantly localized in the nucleus (By similarity).</text>
</comment>
<comment type="PTM">
    <text evidence="1">Ubiquitinated; which may lead to proteasomal degradation.</text>
</comment>
<comment type="PTM">
    <text evidence="1">Sumoylation inhibits its ubiquitination and promotes its negative regulation of the CLOCK-BMAL1 heterodimer transcriptional activator activity.</text>
</comment>
<organism>
    <name type="scientific">Pongo abelii</name>
    <name type="common">Sumatran orangutan</name>
    <name type="synonym">Pongo pygmaeus abelii</name>
    <dbReference type="NCBI Taxonomy" id="9601"/>
    <lineage>
        <taxon>Eukaryota</taxon>
        <taxon>Metazoa</taxon>
        <taxon>Chordata</taxon>
        <taxon>Craniata</taxon>
        <taxon>Vertebrata</taxon>
        <taxon>Euteleostomi</taxon>
        <taxon>Mammalia</taxon>
        <taxon>Eutheria</taxon>
        <taxon>Euarchontoglires</taxon>
        <taxon>Primates</taxon>
        <taxon>Haplorrhini</taxon>
        <taxon>Catarrhini</taxon>
        <taxon>Hominidae</taxon>
        <taxon>Pongo</taxon>
    </lineage>
</organism>
<keyword id="KW-0090">Biological rhythms</keyword>
<keyword id="KW-0963">Cytoplasm</keyword>
<keyword id="KW-0238">DNA-binding</keyword>
<keyword id="KW-1017">Isopeptide bond</keyword>
<keyword id="KW-0539">Nucleus</keyword>
<keyword id="KW-0597">Phosphoprotein</keyword>
<keyword id="KW-1185">Reference proteome</keyword>
<keyword id="KW-0678">Repressor</keyword>
<keyword id="KW-0804">Transcription</keyword>
<keyword id="KW-0805">Transcription regulation</keyword>
<keyword id="KW-0832">Ubl conjugation</keyword>
<proteinExistence type="evidence at transcript level"/>
<sequence length="412" mass="45516">MERIPSAQPPPACLPKAPGLEHGDLPGMYPAHMYQVYKSRRGIKRSEDSKETYKLPHRLIEKKRRDRINECIAQLKDLLPEHLKLTTLGHLEKAVVLELTLKHVKALTNLIDQQQQKIIALQSGLQAGELSGRNVETGQEMFCSGFQTCAREVLQYLAKHENTRDLKSSQLVTHLHRVVSELLQGGTSRKSSDPAPKVMDFKEKPSSPAKGSEGPGKNCVPVIQRTFAHSSGEQSGSDTDTDSGYGGESEKGDLRSEQLCFKSDHGRRFTMGERIGAIKQESEEPPTKKNRMQLSDDEGHFTSSDLISSPFLGPHPHQPPFCLPFYLIPPSATAYLPMLEKCWYPTSVPVLYPGLNASAAALSSFMNPDKISAPLLMPQRLPSPLPAHPSVDSSVLLQALKPIPPLNLETKD</sequence>
<gene>
    <name type="primary">BHLHE40</name>
    <name type="synonym">BHLHB2</name>
</gene>
<reference key="1">
    <citation type="submission" date="2004-11" db="EMBL/GenBank/DDBJ databases">
        <authorList>
            <consortium name="The German cDNA consortium"/>
        </authorList>
    </citation>
    <scope>NUCLEOTIDE SEQUENCE [LARGE SCALE MRNA]</scope>
    <source>
        <tissue>Kidney</tissue>
    </source>
</reference>
<accession>Q5RAI7</accession>
<dbReference type="EMBL" id="CR859028">
    <property type="protein sequence ID" value="CAH91223.1"/>
    <property type="molecule type" value="mRNA"/>
</dbReference>
<dbReference type="RefSeq" id="NP_001125722.1">
    <property type="nucleotide sequence ID" value="NM_001132250.1"/>
</dbReference>
<dbReference type="SMR" id="Q5RAI7"/>
<dbReference type="STRING" id="9601.ENSPPYP00000015316"/>
<dbReference type="GeneID" id="100172646"/>
<dbReference type="KEGG" id="pon:100172646"/>
<dbReference type="CTD" id="8553"/>
<dbReference type="eggNOG" id="KOG4304">
    <property type="taxonomic scope" value="Eukaryota"/>
</dbReference>
<dbReference type="InParanoid" id="Q5RAI7"/>
<dbReference type="OrthoDB" id="690068at2759"/>
<dbReference type="Proteomes" id="UP000001595">
    <property type="component" value="Unplaced"/>
</dbReference>
<dbReference type="GO" id="GO:0005737">
    <property type="term" value="C:cytoplasm"/>
    <property type="evidence" value="ECO:0007669"/>
    <property type="project" value="UniProtKB-SubCell"/>
</dbReference>
<dbReference type="GO" id="GO:0005634">
    <property type="term" value="C:nucleus"/>
    <property type="evidence" value="ECO:0000250"/>
    <property type="project" value="UniProtKB"/>
</dbReference>
<dbReference type="GO" id="GO:0001227">
    <property type="term" value="F:DNA-binding transcription repressor activity, RNA polymerase II-specific"/>
    <property type="evidence" value="ECO:0000250"/>
    <property type="project" value="UniProtKB"/>
</dbReference>
<dbReference type="GO" id="GO:0070888">
    <property type="term" value="F:E-box binding"/>
    <property type="evidence" value="ECO:0000250"/>
    <property type="project" value="UniProtKB"/>
</dbReference>
<dbReference type="GO" id="GO:0046983">
    <property type="term" value="F:protein dimerization activity"/>
    <property type="evidence" value="ECO:0007669"/>
    <property type="project" value="InterPro"/>
</dbReference>
<dbReference type="GO" id="GO:0032922">
    <property type="term" value="P:circadian regulation of gene expression"/>
    <property type="evidence" value="ECO:0000250"/>
    <property type="project" value="UniProtKB"/>
</dbReference>
<dbReference type="GO" id="GO:0007623">
    <property type="term" value="P:circadian rhythm"/>
    <property type="evidence" value="ECO:0000250"/>
    <property type="project" value="UniProtKB"/>
</dbReference>
<dbReference type="GO" id="GO:0045892">
    <property type="term" value="P:negative regulation of DNA-templated transcription"/>
    <property type="evidence" value="ECO:0000250"/>
    <property type="project" value="UniProtKB"/>
</dbReference>
<dbReference type="GO" id="GO:0042752">
    <property type="term" value="P:regulation of circadian rhythm"/>
    <property type="evidence" value="ECO:0000250"/>
    <property type="project" value="UniProtKB"/>
</dbReference>
<dbReference type="CDD" id="cd19749">
    <property type="entry name" value="bHLH-O_DEC1"/>
    <property type="match status" value="1"/>
</dbReference>
<dbReference type="FunFam" id="4.10.280.10:FF:000020">
    <property type="entry name" value="class E basic helix-loop-helix protein 40"/>
    <property type="match status" value="1"/>
</dbReference>
<dbReference type="Gene3D" id="6.10.250.980">
    <property type="match status" value="1"/>
</dbReference>
<dbReference type="Gene3D" id="4.10.280.10">
    <property type="entry name" value="Helix-loop-helix DNA-binding domain"/>
    <property type="match status" value="1"/>
</dbReference>
<dbReference type="InterPro" id="IPR011598">
    <property type="entry name" value="bHLH_dom"/>
</dbReference>
<dbReference type="InterPro" id="IPR050370">
    <property type="entry name" value="HES_HEY"/>
</dbReference>
<dbReference type="InterPro" id="IPR036638">
    <property type="entry name" value="HLH_DNA-bd_sf"/>
</dbReference>
<dbReference type="InterPro" id="IPR003650">
    <property type="entry name" value="Orange_dom"/>
</dbReference>
<dbReference type="PANTHER" id="PTHR10985">
    <property type="entry name" value="BASIC HELIX-LOOP-HELIX TRANSCRIPTION FACTOR, HES-RELATED"/>
    <property type="match status" value="1"/>
</dbReference>
<dbReference type="Pfam" id="PF07527">
    <property type="entry name" value="Hairy_orange"/>
    <property type="match status" value="1"/>
</dbReference>
<dbReference type="Pfam" id="PF00010">
    <property type="entry name" value="HLH"/>
    <property type="match status" value="1"/>
</dbReference>
<dbReference type="SMART" id="SM00353">
    <property type="entry name" value="HLH"/>
    <property type="match status" value="1"/>
</dbReference>
<dbReference type="SMART" id="SM00511">
    <property type="entry name" value="ORANGE"/>
    <property type="match status" value="1"/>
</dbReference>
<dbReference type="SUPFAM" id="SSF47459">
    <property type="entry name" value="HLH, helix-loop-helix DNA-binding domain"/>
    <property type="match status" value="1"/>
</dbReference>
<dbReference type="SUPFAM" id="SSF158457">
    <property type="entry name" value="Orange domain-like"/>
    <property type="match status" value="1"/>
</dbReference>
<dbReference type="PROSITE" id="PS50888">
    <property type="entry name" value="BHLH"/>
    <property type="match status" value="1"/>
</dbReference>
<dbReference type="PROSITE" id="PS51054">
    <property type="entry name" value="ORANGE"/>
    <property type="match status" value="1"/>
</dbReference>
<feature type="chain" id="PRO_0000354687" description="Class E basic helix-loop-helix protein 40">
    <location>
        <begin position="1"/>
        <end position="412"/>
    </location>
</feature>
<feature type="domain" description="bHLH" evidence="5">
    <location>
        <begin position="52"/>
        <end position="107"/>
    </location>
</feature>
<feature type="domain" description="Orange" evidence="4">
    <location>
        <begin position="142"/>
        <end position="175"/>
    </location>
</feature>
<feature type="region of interest" description="Essential for interaction with BMAL1, E-box binding and repressor activity against the CLOCK-BMAL1 heterodimer" evidence="1">
    <location>
        <begin position="1"/>
        <end position="139"/>
    </location>
</feature>
<feature type="region of interest" description="Necessary for interaction with RXRA and repressor activity against RXRA" evidence="1">
    <location>
        <begin position="75"/>
        <end position="79"/>
    </location>
</feature>
<feature type="region of interest" description="Disordered" evidence="6">
    <location>
        <begin position="183"/>
        <end position="259"/>
    </location>
</feature>
<feature type="region of interest" description="Disordered" evidence="6">
    <location>
        <begin position="275"/>
        <end position="309"/>
    </location>
</feature>
<feature type="compositionally biased region" description="Basic and acidic residues" evidence="6">
    <location>
        <begin position="248"/>
        <end position="259"/>
    </location>
</feature>
<feature type="modified residue" description="Phosphoserine" evidence="2">
    <location>
        <position position="235"/>
    </location>
</feature>
<feature type="modified residue" description="Phosphoserine" evidence="3">
    <location>
        <position position="383"/>
    </location>
</feature>
<feature type="cross-link" description="Glycyl lysine isopeptide (Lys-Gly) (interchain with G-Cter in SUMO1, SUMO2 and SUMO3)" evidence="1">
    <location>
        <position position="159"/>
    </location>
</feature>
<feature type="cross-link" description="Glycyl lysine isopeptide (Lys-Gly) (interchain with G-Cter in SUMO2)" evidence="2">
    <location>
        <position position="167"/>
    </location>
</feature>
<feature type="cross-link" description="Glycyl lysine isopeptide (Lys-Gly) (interchain with G-Cter in SUMO1); alternate" evidence="2">
    <location>
        <position position="279"/>
    </location>
</feature>
<feature type="cross-link" description="Glycyl lysine isopeptide (Lys-Gly) (interchain with G-Cter in SUMO1, SUMO2 and SUMO3); alternate" evidence="1">
    <location>
        <position position="279"/>
    </location>
</feature>
<feature type="cross-link" description="Glycyl lysine isopeptide (Lys-Gly) (interchain with G-Cter in SUMO2); alternate" evidence="2">
    <location>
        <position position="279"/>
    </location>
</feature>
<feature type="cross-link" description="Glycyl lysine isopeptide (Lys-Gly) (interchain with G-Cter in SUMO2)" evidence="2">
    <location>
        <position position="288"/>
    </location>
</feature>